<proteinExistence type="uncertain"/>
<keyword id="KW-1185">Reference proteome</keyword>
<gene>
    <name type="ordered locus">MPN_366</name>
    <name type="ORF">H91_orf272</name>
    <name type="ORF">MP470</name>
</gene>
<reference key="1">
    <citation type="journal article" date="1996" name="Nucleic Acids Res.">
        <title>Complete sequence analysis of the genome of the bacterium Mycoplasma pneumoniae.</title>
        <authorList>
            <person name="Himmelreich R."/>
            <person name="Hilbert H."/>
            <person name="Plagens H."/>
            <person name="Pirkl E."/>
            <person name="Li B.-C."/>
            <person name="Herrmann R."/>
        </authorList>
    </citation>
    <scope>NUCLEOTIDE SEQUENCE [LARGE SCALE GENOMIC DNA]</scope>
    <source>
        <strain>ATCC 29342 / M129 / Subtype 1</strain>
    </source>
</reference>
<dbReference type="EMBL" id="U00089">
    <property type="protein sequence ID" value="AAB96118.1"/>
    <property type="molecule type" value="Genomic_DNA"/>
</dbReference>
<dbReference type="PIR" id="S73796">
    <property type="entry name" value="S73796"/>
</dbReference>
<dbReference type="SMR" id="P75415"/>
<dbReference type="IntAct" id="P75415">
    <property type="interactions" value="1"/>
</dbReference>
<dbReference type="STRING" id="272634.MPN_366"/>
<dbReference type="EnsemblBacteria" id="AAB96118">
    <property type="protein sequence ID" value="AAB96118"/>
    <property type="gene ID" value="MPN_366"/>
</dbReference>
<dbReference type="KEGG" id="mpn:MPN_366"/>
<dbReference type="HOGENOM" id="CLU_1022411_0_0_14"/>
<dbReference type="Proteomes" id="UP000000808">
    <property type="component" value="Chromosome"/>
</dbReference>
<comment type="similarity">
    <text evidence="2">Belongs to the MgpC family.</text>
</comment>
<comment type="caution">
    <text evidence="2">Could be the product of a pseudogene.</text>
</comment>
<sequence length="272" mass="30353">MGGLDVVRAAHLHPSYELVDWKRVGQNKLVALVRSALVRVKFQDTTSSDSNNQDTSQNALSFDTQESQKALNGSQSGSSDTSGSNSQDFASYILIFQAAPRATWVFERKIKLALPYVKQESQGSDDQGSNGKGSLYTTLQDLLVEQPVTPYTPNAGLARVNGVAQDTVHFGSGQESSWNSQRSQKGLKTTPLPMPSPALSSIRAARTGSWMKVDRCMNPWIRPRRGRGRMRALGKIRKKQRRKMMPRWWGWLEVVRLEVLLVYKAMARTVRG</sequence>
<accession>P75415</accession>
<evidence type="ECO:0000256" key="1">
    <source>
        <dbReference type="SAM" id="MobiDB-lite"/>
    </source>
</evidence>
<evidence type="ECO:0000305" key="2"/>
<protein>
    <recommendedName>
        <fullName>Putative MgpC-like protein MPN_366</fullName>
    </recommendedName>
</protein>
<name>Y366_MYCPN</name>
<organism>
    <name type="scientific">Mycoplasma pneumoniae (strain ATCC 29342 / M129 / Subtype 1)</name>
    <name type="common">Mycoplasmoides pneumoniae</name>
    <dbReference type="NCBI Taxonomy" id="272634"/>
    <lineage>
        <taxon>Bacteria</taxon>
        <taxon>Bacillati</taxon>
        <taxon>Mycoplasmatota</taxon>
        <taxon>Mycoplasmoidales</taxon>
        <taxon>Mycoplasmoidaceae</taxon>
        <taxon>Mycoplasmoides</taxon>
    </lineage>
</organism>
<feature type="chain" id="PRO_0000210722" description="Putative MgpC-like protein MPN_366">
    <location>
        <begin position="1"/>
        <end position="272"/>
    </location>
</feature>
<feature type="region of interest" description="Disordered" evidence="1">
    <location>
        <begin position="65"/>
        <end position="84"/>
    </location>
</feature>
<feature type="region of interest" description="Disordered" evidence="1">
    <location>
        <begin position="171"/>
        <end position="196"/>
    </location>
</feature>
<feature type="compositionally biased region" description="Low complexity" evidence="1">
    <location>
        <begin position="72"/>
        <end position="84"/>
    </location>
</feature>
<feature type="compositionally biased region" description="Polar residues" evidence="1">
    <location>
        <begin position="173"/>
        <end position="187"/>
    </location>
</feature>